<name>LMNB1_RAT</name>
<proteinExistence type="evidence at protein level"/>
<gene>
    <name type="primary">Lmnb1</name>
</gene>
<dbReference type="EMBL" id="U72353">
    <property type="protein sequence ID" value="AAB09600.1"/>
    <property type="molecule type" value="mRNA"/>
</dbReference>
<dbReference type="RefSeq" id="NP_446357.1">
    <property type="nucleotide sequence ID" value="NM_053905.1"/>
</dbReference>
<dbReference type="BMRB" id="P70615"/>
<dbReference type="SMR" id="P70615"/>
<dbReference type="BioGRID" id="250568">
    <property type="interactions" value="14"/>
</dbReference>
<dbReference type="FunCoup" id="P70615">
    <property type="interactions" value="2481"/>
</dbReference>
<dbReference type="IntAct" id="P70615">
    <property type="interactions" value="1"/>
</dbReference>
<dbReference type="MINT" id="P70615"/>
<dbReference type="STRING" id="10116.ENSRNOP00000019351"/>
<dbReference type="CarbonylDB" id="P70615"/>
<dbReference type="GlyGen" id="P70615">
    <property type="glycosylation" value="1 site"/>
</dbReference>
<dbReference type="iPTMnet" id="P70615"/>
<dbReference type="PhosphoSitePlus" id="P70615"/>
<dbReference type="jPOST" id="P70615"/>
<dbReference type="PaxDb" id="10116-ENSRNOP00000019351"/>
<dbReference type="GeneID" id="116685"/>
<dbReference type="KEGG" id="rno:116685"/>
<dbReference type="UCSC" id="RGD:620522">
    <property type="organism name" value="rat"/>
</dbReference>
<dbReference type="AGR" id="RGD:620522"/>
<dbReference type="CTD" id="4001"/>
<dbReference type="RGD" id="620522">
    <property type="gene designation" value="Lmnb1"/>
</dbReference>
<dbReference type="eggNOG" id="KOG0977">
    <property type="taxonomic scope" value="Eukaryota"/>
</dbReference>
<dbReference type="InParanoid" id="P70615"/>
<dbReference type="PhylomeDB" id="P70615"/>
<dbReference type="Reactome" id="R-RNO-2980766">
    <property type="pathway name" value="Nuclear Envelope Breakdown"/>
</dbReference>
<dbReference type="Reactome" id="R-RNO-2995383">
    <property type="pathway name" value="Initiation of Nuclear Envelope (NE) Reformation"/>
</dbReference>
<dbReference type="Reactome" id="R-RNO-352238">
    <property type="pathway name" value="Breakdown of the nuclear lamina"/>
</dbReference>
<dbReference type="Reactome" id="R-RNO-4419969">
    <property type="pathway name" value="Depolymerization of the Nuclear Lamina"/>
</dbReference>
<dbReference type="Reactome" id="R-RNO-9013405">
    <property type="pathway name" value="RHOD GTPase cycle"/>
</dbReference>
<dbReference type="Reactome" id="R-RNO-9035034">
    <property type="pathway name" value="RHOF GTPase cycle"/>
</dbReference>
<dbReference type="PRO" id="PR:P70615"/>
<dbReference type="Proteomes" id="UP000002494">
    <property type="component" value="Unplaced"/>
</dbReference>
<dbReference type="GO" id="GO:0005638">
    <property type="term" value="C:lamin filament"/>
    <property type="evidence" value="ECO:0000266"/>
    <property type="project" value="RGD"/>
</dbReference>
<dbReference type="GO" id="GO:0005635">
    <property type="term" value="C:nuclear envelope"/>
    <property type="evidence" value="ECO:0000314"/>
    <property type="project" value="RGD"/>
</dbReference>
<dbReference type="GO" id="GO:0005637">
    <property type="term" value="C:nuclear inner membrane"/>
    <property type="evidence" value="ECO:0000266"/>
    <property type="project" value="RGD"/>
</dbReference>
<dbReference type="GO" id="GO:0005652">
    <property type="term" value="C:nuclear lamina"/>
    <property type="evidence" value="ECO:0000314"/>
    <property type="project" value="RGD"/>
</dbReference>
<dbReference type="GO" id="GO:0016363">
    <property type="term" value="C:nuclear matrix"/>
    <property type="evidence" value="ECO:0000314"/>
    <property type="project" value="RGD"/>
</dbReference>
<dbReference type="GO" id="GO:0031965">
    <property type="term" value="C:nuclear membrane"/>
    <property type="evidence" value="ECO:0000314"/>
    <property type="project" value="RGD"/>
</dbReference>
<dbReference type="GO" id="GO:0034399">
    <property type="term" value="C:nuclear periphery"/>
    <property type="evidence" value="ECO:0000266"/>
    <property type="project" value="RGD"/>
</dbReference>
<dbReference type="GO" id="GO:0005654">
    <property type="term" value="C:nucleoplasm"/>
    <property type="evidence" value="ECO:0000266"/>
    <property type="project" value="RGD"/>
</dbReference>
<dbReference type="GO" id="GO:0005634">
    <property type="term" value="C:nucleus"/>
    <property type="evidence" value="ECO:0000266"/>
    <property type="project" value="RGD"/>
</dbReference>
<dbReference type="GO" id="GO:0003690">
    <property type="term" value="F:double-stranded DNA binding"/>
    <property type="evidence" value="ECO:0000266"/>
    <property type="project" value="RGD"/>
</dbReference>
<dbReference type="GO" id="GO:0043274">
    <property type="term" value="F:phospholipase binding"/>
    <property type="evidence" value="ECO:0000266"/>
    <property type="project" value="RGD"/>
</dbReference>
<dbReference type="GO" id="GO:1990837">
    <property type="term" value="F:sequence-specific double-stranded DNA binding"/>
    <property type="evidence" value="ECO:0000266"/>
    <property type="project" value="RGD"/>
</dbReference>
<dbReference type="GO" id="GO:0005200">
    <property type="term" value="F:structural constituent of cytoskeleton"/>
    <property type="evidence" value="ECO:0000318"/>
    <property type="project" value="GO_Central"/>
</dbReference>
<dbReference type="GO" id="GO:0160123">
    <property type="term" value="F:structural constituent of nuclear lamina"/>
    <property type="evidence" value="ECO:0000266"/>
    <property type="project" value="RGD"/>
</dbReference>
<dbReference type="GO" id="GO:1904613">
    <property type="term" value="P:cellular response to 2,3,7,8-tetrachlorodibenzodioxine"/>
    <property type="evidence" value="ECO:0000270"/>
    <property type="project" value="RGD"/>
</dbReference>
<dbReference type="GO" id="GO:0071386">
    <property type="term" value="P:cellular response to corticosterone stimulus"/>
    <property type="evidence" value="ECO:0000270"/>
    <property type="project" value="RGD"/>
</dbReference>
<dbReference type="GO" id="GO:1905232">
    <property type="term" value="P:cellular response to L-glutamate"/>
    <property type="evidence" value="ECO:0000314"/>
    <property type="project" value="RGD"/>
</dbReference>
<dbReference type="GO" id="GO:0031507">
    <property type="term" value="P:heterochromatin formation"/>
    <property type="evidence" value="ECO:0000318"/>
    <property type="project" value="GO_Central"/>
</dbReference>
<dbReference type="GO" id="GO:0022008">
    <property type="term" value="P:neurogenesis"/>
    <property type="evidence" value="ECO:0000270"/>
    <property type="project" value="RGD"/>
</dbReference>
<dbReference type="GO" id="GO:0006998">
    <property type="term" value="P:nuclear envelope organization"/>
    <property type="evidence" value="ECO:0000250"/>
    <property type="project" value="UniProtKB"/>
</dbReference>
<dbReference type="GO" id="GO:0007097">
    <property type="term" value="P:nuclear migration"/>
    <property type="evidence" value="ECO:0000318"/>
    <property type="project" value="GO_Central"/>
</dbReference>
<dbReference type="GO" id="GO:0051664">
    <property type="term" value="P:nuclear pore localization"/>
    <property type="evidence" value="ECO:0000318"/>
    <property type="project" value="GO_Central"/>
</dbReference>
<dbReference type="GO" id="GO:0090435">
    <property type="term" value="P:protein localization to nuclear envelope"/>
    <property type="evidence" value="ECO:0000318"/>
    <property type="project" value="GO_Central"/>
</dbReference>
<dbReference type="GO" id="GO:0009410">
    <property type="term" value="P:response to xenobiotic stimulus"/>
    <property type="evidence" value="ECO:0000270"/>
    <property type="project" value="RGD"/>
</dbReference>
<dbReference type="FunFam" id="1.20.5.170:FF:000033">
    <property type="entry name" value="Lamin A/C"/>
    <property type="match status" value="1"/>
</dbReference>
<dbReference type="FunFam" id="1.20.5.1160:FF:000007">
    <property type="entry name" value="Lamin B1"/>
    <property type="match status" value="1"/>
</dbReference>
<dbReference type="FunFam" id="2.60.40.1260:FF:000002">
    <property type="entry name" value="Lamin B1"/>
    <property type="match status" value="1"/>
</dbReference>
<dbReference type="Gene3D" id="1.20.5.170">
    <property type="match status" value="1"/>
</dbReference>
<dbReference type="Gene3D" id="2.60.40.1260">
    <property type="entry name" value="Lamin Tail domain"/>
    <property type="match status" value="1"/>
</dbReference>
<dbReference type="Gene3D" id="1.20.5.1160">
    <property type="entry name" value="Vasodilator-stimulated phosphoprotein"/>
    <property type="match status" value="2"/>
</dbReference>
<dbReference type="InterPro" id="IPR018039">
    <property type="entry name" value="IF_conserved"/>
</dbReference>
<dbReference type="InterPro" id="IPR039008">
    <property type="entry name" value="IF_rod_dom"/>
</dbReference>
<dbReference type="InterPro" id="IPR001322">
    <property type="entry name" value="Lamin_tail_dom"/>
</dbReference>
<dbReference type="InterPro" id="IPR036415">
    <property type="entry name" value="Lamin_tail_dom_sf"/>
</dbReference>
<dbReference type="PANTHER" id="PTHR45721">
    <property type="entry name" value="LAMIN DM0-RELATED"/>
    <property type="match status" value="1"/>
</dbReference>
<dbReference type="PANTHER" id="PTHR45721:SF3">
    <property type="entry name" value="LAMIN-B1"/>
    <property type="match status" value="1"/>
</dbReference>
<dbReference type="Pfam" id="PF00038">
    <property type="entry name" value="Filament"/>
    <property type="match status" value="1"/>
</dbReference>
<dbReference type="Pfam" id="PF00932">
    <property type="entry name" value="LTD"/>
    <property type="match status" value="1"/>
</dbReference>
<dbReference type="SMART" id="SM01391">
    <property type="entry name" value="Filament"/>
    <property type="match status" value="1"/>
</dbReference>
<dbReference type="SUPFAM" id="SSF64593">
    <property type="entry name" value="Intermediate filament protein, coiled coil region"/>
    <property type="match status" value="2"/>
</dbReference>
<dbReference type="SUPFAM" id="SSF74853">
    <property type="entry name" value="Lamin A/C globular tail domain"/>
    <property type="match status" value="1"/>
</dbReference>
<dbReference type="PROSITE" id="PS00226">
    <property type="entry name" value="IF_ROD_1"/>
    <property type="match status" value="1"/>
</dbReference>
<dbReference type="PROSITE" id="PS51842">
    <property type="entry name" value="IF_ROD_2"/>
    <property type="match status" value="1"/>
</dbReference>
<dbReference type="PROSITE" id="PS51841">
    <property type="entry name" value="LTD"/>
    <property type="match status" value="1"/>
</dbReference>
<evidence type="ECO:0000250" key="1">
    <source>
        <dbReference type="UniProtKB" id="P02545"/>
    </source>
</evidence>
<evidence type="ECO:0000250" key="2">
    <source>
        <dbReference type="UniProtKB" id="P14733"/>
    </source>
</evidence>
<evidence type="ECO:0000250" key="3">
    <source>
        <dbReference type="UniProtKB" id="P20700"/>
    </source>
</evidence>
<evidence type="ECO:0000250" key="4">
    <source>
        <dbReference type="UniProtKB" id="P21619"/>
    </source>
</evidence>
<evidence type="ECO:0000255" key="5"/>
<evidence type="ECO:0000255" key="6">
    <source>
        <dbReference type="PROSITE-ProRule" id="PRU01187"/>
    </source>
</evidence>
<evidence type="ECO:0000255" key="7">
    <source>
        <dbReference type="PROSITE-ProRule" id="PRU01188"/>
    </source>
</evidence>
<evidence type="ECO:0000256" key="8">
    <source>
        <dbReference type="SAM" id="MobiDB-lite"/>
    </source>
</evidence>
<evidence type="ECO:0007744" key="9">
    <source>
    </source>
</evidence>
<accession>P70615</accession>
<keyword id="KW-0007">Acetylation</keyword>
<keyword id="KW-0175">Coiled coil</keyword>
<keyword id="KW-0903">Direct protein sequencing</keyword>
<keyword id="KW-1015">Disulfide bond</keyword>
<keyword id="KW-0325">Glycoprotein</keyword>
<keyword id="KW-0403">Intermediate filament</keyword>
<keyword id="KW-1017">Isopeptide bond</keyword>
<keyword id="KW-0449">Lipoprotein</keyword>
<keyword id="KW-0488">Methylation</keyword>
<keyword id="KW-0539">Nucleus</keyword>
<keyword id="KW-0597">Phosphoprotein</keyword>
<keyword id="KW-0636">Prenylation</keyword>
<keyword id="KW-1185">Reference proteome</keyword>
<keyword id="KW-0832">Ubl conjugation</keyword>
<sequence>MATATPVQQRAGSRASAPATPFSPTRLSRLQEKEELRELNDRLAVYIDKVRSLETENSALQLQVTEREEVRGRELTGLKALYETELADARRALDDTARERAKLQIELGKFKAEHDQLLLNYAKKESDLSGAQIKLREYEAALNSKDAALATALGDKKSLEGDLEDLKDQIAQLEASLSAAKKQLADETLLKVDLENRCQSLTEDLEFRKNMYEEEINETRRKHETRLVEVDSGRQIEYEYKLAQALHEMREQHDAQVRLYKEELEQTYHAKLENARLSSEMNTSTVNSARGGMMESRMRIESLSSQLSNLQKDSRACLERIQELEDMLAKERDNSRRMLSDKEREMAEIRDQMQQQLNDYEQLLDVKLALDMEISAYRKLLEGEEERLKLSPSPSSRVTVSRASSSRSVRTTRGKRKRVDVEESEASSSVSISHSASATGNVCIEEIDVDGKFIRLKNTSEQDQPMGGWEMIRKIGDTSVSYKYTSRYVLKAGQTVTVWAANAGVTASPPTDLIWKNQNSWGTGEDVKVVLKNSQGEEVAQRSTVFKTTIPEEEEEEEEEPIGVPLEEERFHQQGTPRASNKSCAIM</sequence>
<organism>
    <name type="scientific">Rattus norvegicus</name>
    <name type="common">Rat</name>
    <dbReference type="NCBI Taxonomy" id="10116"/>
    <lineage>
        <taxon>Eukaryota</taxon>
        <taxon>Metazoa</taxon>
        <taxon>Chordata</taxon>
        <taxon>Craniata</taxon>
        <taxon>Vertebrata</taxon>
        <taxon>Euteleostomi</taxon>
        <taxon>Mammalia</taxon>
        <taxon>Eutheria</taxon>
        <taxon>Euarchontoglires</taxon>
        <taxon>Glires</taxon>
        <taxon>Rodentia</taxon>
        <taxon>Myomorpha</taxon>
        <taxon>Muroidea</taxon>
        <taxon>Muridae</taxon>
        <taxon>Murinae</taxon>
        <taxon>Rattus</taxon>
    </lineage>
</organism>
<protein>
    <recommendedName>
        <fullName>Lamin-B1</fullName>
    </recommendedName>
</protein>
<comment type="function">
    <text evidence="2">Lamins are intermediate filament proteins that assemble into a filamentous meshwork, and which constitute the major components of the nuclear lamina, a fibrous layer on the nucleoplasmic side of the inner nuclear membrane. Lamins provide a framework for the nuclear envelope, bridging the nuclear envelope and chromatin, thereby playing an important role in nuclear assembly, chromatin organization, nuclear membrane and telomere dynamics. The structural integrity of the lamina is strictly controlled by the cell cycle, as seen by the disintegration and formation of the nuclear envelope in prophase and telophase, respectively.</text>
</comment>
<comment type="subunit">
    <text evidence="2 3">Homodimer. Lamin dimers then assemble into dimeric head-to-tail polymers. Ultimately, two head-to-tail polymers assemble laterally into a protofilament with a uniformly shaped rod of 3.5 nm in diameter (By similarity). Interacts with SPAG4 and SEPT12 (By similarity).</text>
</comment>
<comment type="subcellular location">
    <subcellularLocation>
        <location evidence="2">Nucleus lamina</location>
    </subcellularLocation>
</comment>
<comment type="PTM">
    <text evidence="3">B-type lamins undergo a series of modifications, such as farnesylation and phosphorylation. Increased phosphorylation of the lamins occurs before envelope disintegration and probably plays a role in regulating lamin associations.</text>
</comment>
<comment type="PTM">
    <text evidence="1">Phosphorylation plays a key role in lamin organization, subcellular localization and nuclear envelope disintegration. Phosphorylation by CDK1 at Ser-23 and Ser-393 at the onset of mitosis drives lamin disassembly and nuclear envelope breakdown.</text>
</comment>
<comment type="similarity">
    <text evidence="7">Belongs to the intermediate filament family.</text>
</comment>
<reference key="1">
    <citation type="submission" date="1996-09" db="EMBL/GenBank/DDBJ databases">
        <title>Rattus norvegicus Lamin B1 sequence.</title>
        <authorList>
            <person name="Prakash A.B."/>
            <person name="Rao M.R.S."/>
        </authorList>
    </citation>
    <scope>NUCLEOTIDE SEQUENCE [MRNA]</scope>
    <source>
        <strain>Wistar</strain>
        <tissue>Testis</tissue>
    </source>
</reference>
<reference key="2">
    <citation type="submission" date="2007-04" db="UniProtKB">
        <authorList>
            <person name="Lubec G."/>
            <person name="Diao W."/>
        </authorList>
    </citation>
    <scope>PROTEIN SEQUENCE OF 52-67; 198-208 AND 368-378</scope>
    <scope>IDENTIFICATION BY MASS SPECTROMETRY</scope>
    <source>
        <strain>Sprague-Dawley</strain>
        <tissue>Hippocampus</tissue>
    </source>
</reference>
<reference key="3">
    <citation type="journal article" date="2005" name="FEBS J.">
        <title>Proteome analysis of a rat liver nuclear insoluble protein fraction and localization of a novel protein, ISP36, to compartments in the interchromatin space.</title>
        <authorList>
            <person name="Segawa M."/>
            <person name="Niino K."/>
            <person name="Mineki R."/>
            <person name="Kaga N."/>
            <person name="Murayama K."/>
            <person name="Sugimoto K."/>
            <person name="Watanabe Y."/>
            <person name="Furukawa K."/>
            <person name="Horigome T."/>
        </authorList>
    </citation>
    <scope>PROTEIN SEQUENCE OF 259-266; 368-376 AND 474-482</scope>
    <source>
        <tissue>Liver</tissue>
    </source>
</reference>
<reference key="4">
    <citation type="journal article" date="2012" name="Nat. Commun.">
        <title>Quantitative maps of protein phosphorylation sites across 14 different rat organs and tissues.</title>
        <authorList>
            <person name="Lundby A."/>
            <person name="Secher A."/>
            <person name="Lage K."/>
            <person name="Nordsborg N.B."/>
            <person name="Dmytriyev A."/>
            <person name="Lundby C."/>
            <person name="Olsen J.V."/>
        </authorList>
    </citation>
    <scope>PHOSPHORYLATION [LARGE SCALE ANALYSIS] AT SER-126; SER-158 AND THR-576</scope>
    <scope>IDENTIFICATION BY MASS SPECTROMETRY [LARGE SCALE ANALYSIS]</scope>
</reference>
<feature type="initiator methionine" description="Removed" evidence="3">
    <location>
        <position position="1"/>
    </location>
</feature>
<feature type="chain" id="PRO_0000063818" description="Lamin-B1">
    <location>
        <begin position="2"/>
        <end position="584"/>
    </location>
</feature>
<feature type="propeptide" id="PRO_0000403468" description="Removed in mature form" evidence="3">
    <location>
        <begin position="585"/>
        <end position="587"/>
    </location>
</feature>
<feature type="domain" description="IF rod" evidence="7">
    <location>
        <begin position="32"/>
        <end position="388"/>
    </location>
</feature>
<feature type="domain" description="LTD" evidence="6">
    <location>
        <begin position="430"/>
        <end position="546"/>
    </location>
</feature>
<feature type="region of interest" description="Disordered" evidence="8">
    <location>
        <begin position="1"/>
        <end position="29"/>
    </location>
</feature>
<feature type="region of interest" description="Head">
    <location>
        <begin position="2"/>
        <end position="34"/>
    </location>
</feature>
<feature type="region of interest" description="Coil 1A">
    <location>
        <begin position="35"/>
        <end position="69"/>
    </location>
</feature>
<feature type="region of interest" description="Linker 1">
    <location>
        <begin position="70"/>
        <end position="81"/>
    </location>
</feature>
<feature type="region of interest" description="Coil 1B">
    <location>
        <begin position="82"/>
        <end position="215"/>
    </location>
</feature>
<feature type="region of interest" description="Linker 2">
    <location>
        <begin position="216"/>
        <end position="243"/>
    </location>
</feature>
<feature type="region of interest" description="Coil 2">
    <location>
        <begin position="244"/>
        <end position="386"/>
    </location>
</feature>
<feature type="region of interest" description="Tail">
    <location>
        <begin position="387"/>
        <end position="587"/>
    </location>
</feature>
<feature type="region of interest" description="Disordered" evidence="8">
    <location>
        <begin position="390"/>
        <end position="432"/>
    </location>
</feature>
<feature type="region of interest" description="Disordered" evidence="8">
    <location>
        <begin position="550"/>
        <end position="587"/>
    </location>
</feature>
<feature type="short sequence motif" description="Nuclear localization signal" evidence="5">
    <location>
        <begin position="415"/>
        <end position="420"/>
    </location>
</feature>
<feature type="compositionally biased region" description="Polar residues" evidence="8">
    <location>
        <begin position="1"/>
        <end position="11"/>
    </location>
</feature>
<feature type="compositionally biased region" description="Low complexity" evidence="8">
    <location>
        <begin position="390"/>
        <end position="409"/>
    </location>
</feature>
<feature type="compositionally biased region" description="Acidic residues" evidence="8">
    <location>
        <begin position="551"/>
        <end position="561"/>
    </location>
</feature>
<feature type="compositionally biased region" description="Polar residues" evidence="8">
    <location>
        <begin position="573"/>
        <end position="587"/>
    </location>
</feature>
<feature type="modified residue" description="N-acetylalanine" evidence="3">
    <location>
        <position position="2"/>
    </location>
</feature>
<feature type="modified residue" description="Phosphothreonine" evidence="3">
    <location>
        <position position="3"/>
    </location>
</feature>
<feature type="modified residue" description="Phosphothreonine" evidence="3">
    <location>
        <position position="5"/>
    </location>
</feature>
<feature type="modified residue" description="Omega-N-methylarginine" evidence="3">
    <location>
        <position position="14"/>
    </location>
</feature>
<feature type="modified residue" description="Phosphoserine" evidence="2">
    <location>
        <position position="16"/>
    </location>
</feature>
<feature type="modified residue" description="Phosphothreonine" evidence="3">
    <location>
        <position position="20"/>
    </location>
</feature>
<feature type="modified residue" description="Phosphoserine" evidence="3">
    <location>
        <position position="23"/>
    </location>
</feature>
<feature type="modified residue" description="Phosphothreonine" evidence="3">
    <location>
        <position position="25"/>
    </location>
</feature>
<feature type="modified residue" description="Phosphoserine" evidence="3">
    <location>
        <position position="28"/>
    </location>
</feature>
<feature type="modified residue" description="N6-acetyllysine" evidence="2">
    <location>
        <position position="111"/>
    </location>
</feature>
<feature type="modified residue" description="Phosphoserine" evidence="9">
    <location>
        <position position="126"/>
    </location>
</feature>
<feature type="modified residue" description="N6-acetyllysine; alternate" evidence="3">
    <location>
        <position position="157"/>
    </location>
</feature>
<feature type="modified residue" description="Phosphoserine" evidence="9">
    <location>
        <position position="158"/>
    </location>
</feature>
<feature type="modified residue" description="Phosphoserine" evidence="3">
    <location>
        <position position="200"/>
    </location>
</feature>
<feature type="modified residue" description="Phosphoserine" evidence="3">
    <location>
        <position position="232"/>
    </location>
</feature>
<feature type="modified residue" description="N6-acetyllysine; alternate" evidence="3">
    <location>
        <position position="271"/>
    </location>
</feature>
<feature type="modified residue" description="Phosphoserine" evidence="3">
    <location>
        <position position="278"/>
    </location>
</feature>
<feature type="modified residue" description="Phosphoserine" evidence="3">
    <location>
        <position position="302"/>
    </location>
</feature>
<feature type="modified residue" description="N6-acetyllysine; alternate" evidence="2">
    <location>
        <position position="330"/>
    </location>
</feature>
<feature type="modified residue" description="Phosphoserine" evidence="3">
    <location>
        <position position="375"/>
    </location>
</feature>
<feature type="modified residue" description="Phosphoserine" evidence="1">
    <location>
        <position position="393"/>
    </location>
</feature>
<feature type="modified residue" description="Omega-N-methylarginine" evidence="4">
    <location>
        <position position="413"/>
    </location>
</feature>
<feature type="modified residue" description="N6-acetyllysine" evidence="3">
    <location>
        <position position="483"/>
    </location>
</feature>
<feature type="modified residue" description="Phosphoserine" evidence="3">
    <location>
        <position position="534"/>
    </location>
</feature>
<feature type="modified residue" description="Phosphothreonine" evidence="9">
    <location>
        <position position="576"/>
    </location>
</feature>
<feature type="modified residue" description="Cysteine methyl ester" evidence="3">
    <location>
        <position position="584"/>
    </location>
</feature>
<feature type="lipid moiety-binding region" description="S-farnesyl cysteine" evidence="3">
    <location>
        <position position="584"/>
    </location>
</feature>
<feature type="glycosylation site" description="O-linked (GlcNAc) threonine" evidence="3">
    <location>
        <position position="399"/>
    </location>
</feature>
<feature type="disulfide bond" description="Interchain" evidence="3">
    <location>
        <position position="317"/>
    </location>
</feature>
<feature type="cross-link" description="Glycyl lysine isopeptide (Lys-Gly) (interchain with G-Cter in SUMO2)" evidence="3">
    <location>
        <position position="102"/>
    </location>
</feature>
<feature type="cross-link" description="Glycyl lysine isopeptide (Lys-Gly) (interchain with G-Cter in SUMO2)" evidence="3">
    <location>
        <position position="123"/>
    </location>
</feature>
<feature type="cross-link" description="Glycyl lysine isopeptide (Lys-Gly) (interchain with G-Cter in SUMO2)" evidence="3">
    <location>
        <position position="145"/>
    </location>
</feature>
<feature type="cross-link" description="Glycyl lysine isopeptide (Lys-Gly) (interchain with G-Cter in SUMO2); alternate" evidence="3">
    <location>
        <position position="157"/>
    </location>
</feature>
<feature type="cross-link" description="Glycyl lysine isopeptide (Lys-Gly) (interchain with G-Cter in SUMO2)" evidence="3">
    <location>
        <position position="181"/>
    </location>
</feature>
<feature type="cross-link" description="Glycyl lysine isopeptide (Lys-Gly) (interchain with G-Cter in SUMO2)" evidence="3">
    <location>
        <position position="241"/>
    </location>
</feature>
<feature type="cross-link" description="Glycyl lysine isopeptide (Lys-Gly) (interchain with G-Cter in SUMO2)" evidence="3">
    <location>
        <position position="261"/>
    </location>
</feature>
<feature type="cross-link" description="Glycyl lysine isopeptide (Lys-Gly) (interchain with G-Cter in SUMO2); alternate" evidence="3">
    <location>
        <position position="271"/>
    </location>
</feature>
<feature type="cross-link" description="Glycyl lysine isopeptide (Lys-Gly) (interchain with G-Cter in SUMO2)" evidence="3">
    <location>
        <position position="312"/>
    </location>
</feature>
<feature type="cross-link" description="Glycyl lysine isopeptide (Lys-Gly) (interchain with G-Cter in SUMO2); alternate" evidence="3">
    <location>
        <position position="330"/>
    </location>
</feature>
<feature type="cross-link" description="Glycyl lysine isopeptide (Lys-Gly) (interchain with G-Cter in SUMO2)" evidence="3">
    <location>
        <position position="532"/>
    </location>
</feature>
<feature type="cross-link" description="Glycyl lysine isopeptide (Lys-Gly) (interchain with G-Cter in SUMO2)" evidence="3">
    <location>
        <position position="547"/>
    </location>
</feature>